<proteinExistence type="inferred from homology"/>
<organism>
    <name type="scientific">Flavobacterium johnsoniae (strain ATCC 17061 / DSM 2064 / JCM 8514 / BCRC 14874 / CCUG 350202 / NBRC 14942 / NCIMB 11054 / UW101)</name>
    <name type="common">Cytophaga johnsonae</name>
    <dbReference type="NCBI Taxonomy" id="376686"/>
    <lineage>
        <taxon>Bacteria</taxon>
        <taxon>Pseudomonadati</taxon>
        <taxon>Bacteroidota</taxon>
        <taxon>Flavobacteriia</taxon>
        <taxon>Flavobacteriales</taxon>
        <taxon>Flavobacteriaceae</taxon>
        <taxon>Flavobacterium</taxon>
    </lineage>
</organism>
<keyword id="KW-1003">Cell membrane</keyword>
<keyword id="KW-0350">Heme biosynthesis</keyword>
<keyword id="KW-0408">Iron</keyword>
<keyword id="KW-0472">Membrane</keyword>
<keyword id="KW-0479">Metal-binding</keyword>
<keyword id="KW-0560">Oxidoreductase</keyword>
<keyword id="KW-0812">Transmembrane</keyword>
<keyword id="KW-1133">Transmembrane helix</keyword>
<accession>A5FA69</accession>
<dbReference type="EC" id="1.17.99.9" evidence="1"/>
<dbReference type="EMBL" id="CP000685">
    <property type="protein sequence ID" value="ABQ07906.1"/>
    <property type="molecule type" value="Genomic_DNA"/>
</dbReference>
<dbReference type="RefSeq" id="WP_012026872.1">
    <property type="nucleotide sequence ID" value="NC_009441.1"/>
</dbReference>
<dbReference type="SMR" id="A5FA69"/>
<dbReference type="STRING" id="376686.Fjoh_4907"/>
<dbReference type="KEGG" id="fjo:Fjoh_4907"/>
<dbReference type="eggNOG" id="COG1612">
    <property type="taxonomic scope" value="Bacteria"/>
</dbReference>
<dbReference type="HOGENOM" id="CLU_017627_0_0_10"/>
<dbReference type="OrthoDB" id="9793156at2"/>
<dbReference type="UniPathway" id="UPA00269">
    <property type="reaction ID" value="UER00713"/>
</dbReference>
<dbReference type="Proteomes" id="UP000006694">
    <property type="component" value="Chromosome"/>
</dbReference>
<dbReference type="GO" id="GO:0005886">
    <property type="term" value="C:plasma membrane"/>
    <property type="evidence" value="ECO:0007669"/>
    <property type="project" value="UniProtKB-SubCell"/>
</dbReference>
<dbReference type="GO" id="GO:0046872">
    <property type="term" value="F:metal ion binding"/>
    <property type="evidence" value="ECO:0007669"/>
    <property type="project" value="UniProtKB-KW"/>
</dbReference>
<dbReference type="GO" id="GO:0016653">
    <property type="term" value="F:oxidoreductase activity, acting on NAD(P)H, heme protein as acceptor"/>
    <property type="evidence" value="ECO:0007669"/>
    <property type="project" value="InterPro"/>
</dbReference>
<dbReference type="GO" id="GO:0006784">
    <property type="term" value="P:heme A biosynthetic process"/>
    <property type="evidence" value="ECO:0007669"/>
    <property type="project" value="UniProtKB-UniRule"/>
</dbReference>
<dbReference type="HAMAP" id="MF_01665">
    <property type="entry name" value="HemeA_synth_type2"/>
    <property type="match status" value="1"/>
</dbReference>
<dbReference type="InterPro" id="IPR003780">
    <property type="entry name" value="COX15/CtaA_fam"/>
</dbReference>
<dbReference type="InterPro" id="IPR023754">
    <property type="entry name" value="HemeA_Synthase_type2"/>
</dbReference>
<dbReference type="PANTHER" id="PTHR23289">
    <property type="entry name" value="CYTOCHROME C OXIDASE ASSEMBLY PROTEIN COX15"/>
    <property type="match status" value="1"/>
</dbReference>
<dbReference type="PANTHER" id="PTHR23289:SF2">
    <property type="entry name" value="CYTOCHROME C OXIDASE ASSEMBLY PROTEIN COX15 HOMOLOG"/>
    <property type="match status" value="1"/>
</dbReference>
<dbReference type="Pfam" id="PF02628">
    <property type="entry name" value="COX15-CtaA"/>
    <property type="match status" value="1"/>
</dbReference>
<comment type="function">
    <text evidence="1">Catalyzes the conversion of heme O to heme A by two successive hydroxylations of the methyl group at C8. The first hydroxylation forms heme I, the second hydroxylation results in an unstable dihydroxymethyl group, which spontaneously dehydrates, resulting in the formyl group of heme A.</text>
</comment>
<comment type="catalytic activity">
    <reaction evidence="1">
        <text>Fe(II)-heme o + 2 A + H2O = Fe(II)-heme a + 2 AH2</text>
        <dbReference type="Rhea" id="RHEA:63388"/>
        <dbReference type="ChEBI" id="CHEBI:13193"/>
        <dbReference type="ChEBI" id="CHEBI:15377"/>
        <dbReference type="ChEBI" id="CHEBI:17499"/>
        <dbReference type="ChEBI" id="CHEBI:60530"/>
        <dbReference type="ChEBI" id="CHEBI:61715"/>
        <dbReference type="EC" id="1.17.99.9"/>
    </reaction>
    <physiologicalReaction direction="left-to-right" evidence="1">
        <dbReference type="Rhea" id="RHEA:63389"/>
    </physiologicalReaction>
</comment>
<comment type="cofactor">
    <cofactor evidence="1">
        <name>heme b</name>
        <dbReference type="ChEBI" id="CHEBI:60344"/>
    </cofactor>
</comment>
<comment type="pathway">
    <text evidence="1">Porphyrin-containing compound metabolism; heme A biosynthesis; heme A from heme O: step 1/1.</text>
</comment>
<comment type="subunit">
    <text evidence="1">Interacts with CtaB.</text>
</comment>
<comment type="subcellular location">
    <subcellularLocation>
        <location evidence="1">Cell membrane</location>
        <topology evidence="1">Multi-pass membrane protein</topology>
    </subcellularLocation>
</comment>
<comment type="similarity">
    <text evidence="1">Belongs to the COX15/CtaA family. Type 2 subfamily.</text>
</comment>
<evidence type="ECO:0000255" key="1">
    <source>
        <dbReference type="HAMAP-Rule" id="MF_01665"/>
    </source>
</evidence>
<sequence>MKKENKSVIIWLLSGCVLLFLMVVVGGITRLTNSGLSMTDWHLVTDTFPPLTDAKWQAAFDEYKKFPEYQKINIHNDFQLSDYKFIYFWEWFHRFIGRIIGLVFFVPFVYFLAKKKLDTSTIKKCIVLLAMGAFQGFLGWFMVRSGLIDNPDVSHFRLSLHLTFAFITFAYTLWVALDLIYPERNINKILPLRNIARYALAALLIQIIYGGFVAGLNAGLIHNHWPLMSDGEFIHESVFIEQSSLIKNLIEGKSGVQFVHRTFAYAVVAVILFLFFKSKKYTLTRTQSNGINTLVVFVFIQFLLGVFTLLYSVPLALGLIHQIMAFFLLSAMTYTLHRLSK</sequence>
<feature type="chain" id="PRO_0000349035" description="Heme A synthase">
    <location>
        <begin position="1"/>
        <end position="341"/>
    </location>
</feature>
<feature type="transmembrane region" description="Helical" evidence="1">
    <location>
        <begin position="8"/>
        <end position="28"/>
    </location>
</feature>
<feature type="transmembrane region" description="Helical" evidence="1">
    <location>
        <begin position="92"/>
        <end position="112"/>
    </location>
</feature>
<feature type="transmembrane region" description="Helical" evidence="1">
    <location>
        <begin position="126"/>
        <end position="146"/>
    </location>
</feature>
<feature type="transmembrane region" description="Helical" evidence="1">
    <location>
        <begin position="160"/>
        <end position="180"/>
    </location>
</feature>
<feature type="transmembrane region" description="Helical" evidence="1">
    <location>
        <begin position="201"/>
        <end position="221"/>
    </location>
</feature>
<feature type="transmembrane region" description="Helical" evidence="1">
    <location>
        <begin position="256"/>
        <end position="276"/>
    </location>
</feature>
<feature type="transmembrane region" description="Helical" evidence="1">
    <location>
        <begin position="294"/>
        <end position="314"/>
    </location>
</feature>
<feature type="transmembrane region" description="Helical" evidence="1">
    <location>
        <begin position="315"/>
        <end position="335"/>
    </location>
</feature>
<feature type="binding site" description="axial binding residue" evidence="1">
    <location>
        <position position="260"/>
    </location>
    <ligand>
        <name>heme</name>
        <dbReference type="ChEBI" id="CHEBI:30413"/>
    </ligand>
    <ligandPart>
        <name>Fe</name>
        <dbReference type="ChEBI" id="CHEBI:18248"/>
    </ligandPart>
</feature>
<feature type="binding site" description="axial binding residue" evidence="1">
    <location>
        <position position="321"/>
    </location>
    <ligand>
        <name>heme</name>
        <dbReference type="ChEBI" id="CHEBI:30413"/>
    </ligand>
    <ligandPart>
        <name>Fe</name>
        <dbReference type="ChEBI" id="CHEBI:18248"/>
    </ligandPart>
</feature>
<protein>
    <recommendedName>
        <fullName evidence="1">Heme A synthase</fullName>
        <shortName evidence="1">HAS</shortName>
        <ecNumber evidence="1">1.17.99.9</ecNumber>
    </recommendedName>
    <alternativeName>
        <fullName evidence="1">Cytochrome aa3-controlling protein</fullName>
    </alternativeName>
</protein>
<name>CTAA_FLAJ1</name>
<reference key="1">
    <citation type="journal article" date="2009" name="Appl. Environ. Microbiol.">
        <title>Novel features of the polysaccharide-digesting gliding bacterium Flavobacterium johnsoniae as revealed by genome sequence analysis.</title>
        <authorList>
            <person name="McBride M.J."/>
            <person name="Xie G."/>
            <person name="Martens E.C."/>
            <person name="Lapidus A."/>
            <person name="Henrissat B."/>
            <person name="Rhodes R.G."/>
            <person name="Goltsman E."/>
            <person name="Wang W."/>
            <person name="Xu J."/>
            <person name="Hunnicutt D.W."/>
            <person name="Staroscik A.M."/>
            <person name="Hoover T.R."/>
            <person name="Cheng Y.Q."/>
            <person name="Stein J.L."/>
        </authorList>
    </citation>
    <scope>NUCLEOTIDE SEQUENCE [LARGE SCALE GENOMIC DNA]</scope>
    <source>
        <strain>ATCC 17061 / DSM 2064 / JCM 8514 / BCRC 14874 / CCUG 350202 / NBRC 14942 / NCIMB 11054 / UW101</strain>
    </source>
</reference>
<gene>
    <name evidence="1" type="primary">ctaA</name>
    <name type="ordered locus">Fjoh_4907</name>
</gene>